<reference key="1">
    <citation type="journal article" date="1996" name="DNA Res.">
        <title>A 570-kb DNA sequence of the Escherichia coli K-12 genome corresponding to the 28.0-40.1 min region on the linkage map.</title>
        <authorList>
            <person name="Aiba H."/>
            <person name="Baba T."/>
            <person name="Fujita K."/>
            <person name="Hayashi K."/>
            <person name="Inada T."/>
            <person name="Isono K."/>
            <person name="Itoh T."/>
            <person name="Kasai H."/>
            <person name="Kashimoto K."/>
            <person name="Kimura S."/>
            <person name="Kitakawa M."/>
            <person name="Kitagawa M."/>
            <person name="Makino K."/>
            <person name="Miki T."/>
            <person name="Mizobuchi K."/>
            <person name="Mori H."/>
            <person name="Mori T."/>
            <person name="Motomura K."/>
            <person name="Nakade S."/>
            <person name="Nakamura Y."/>
            <person name="Nashimoto H."/>
            <person name="Nishio Y."/>
            <person name="Oshima T."/>
            <person name="Saito N."/>
            <person name="Sampei G."/>
            <person name="Seki Y."/>
            <person name="Sivasundaram S."/>
            <person name="Tagami H."/>
            <person name="Takeda J."/>
            <person name="Takemoto K."/>
            <person name="Takeuchi Y."/>
            <person name="Wada C."/>
            <person name="Yamamoto Y."/>
            <person name="Horiuchi T."/>
        </authorList>
    </citation>
    <scope>NUCLEOTIDE SEQUENCE [LARGE SCALE GENOMIC DNA]</scope>
    <source>
        <strain>K12 / W3110 / ATCC 27325 / DSM 5911</strain>
    </source>
</reference>
<reference key="2">
    <citation type="journal article" date="1997" name="Science">
        <title>The complete genome sequence of Escherichia coli K-12.</title>
        <authorList>
            <person name="Blattner F.R."/>
            <person name="Plunkett G. III"/>
            <person name="Bloch C.A."/>
            <person name="Perna N.T."/>
            <person name="Burland V."/>
            <person name="Riley M."/>
            <person name="Collado-Vides J."/>
            <person name="Glasner J.D."/>
            <person name="Rode C.K."/>
            <person name="Mayhew G.F."/>
            <person name="Gregor J."/>
            <person name="Davis N.W."/>
            <person name="Kirkpatrick H.A."/>
            <person name="Goeden M.A."/>
            <person name="Rose D.J."/>
            <person name="Mau B."/>
            <person name="Shao Y."/>
        </authorList>
    </citation>
    <scope>NUCLEOTIDE SEQUENCE [LARGE SCALE GENOMIC DNA]</scope>
    <source>
        <strain>K12 / MG1655 / ATCC 47076</strain>
    </source>
</reference>
<reference key="3">
    <citation type="journal article" date="2006" name="Mol. Syst. Biol.">
        <title>Highly accurate genome sequences of Escherichia coli K-12 strains MG1655 and W3110.</title>
        <authorList>
            <person name="Hayashi K."/>
            <person name="Morooka N."/>
            <person name="Yamamoto Y."/>
            <person name="Fujita K."/>
            <person name="Isono K."/>
            <person name="Choi S."/>
            <person name="Ohtsubo E."/>
            <person name="Baba T."/>
            <person name="Wanner B.L."/>
            <person name="Mori H."/>
            <person name="Horiuchi T."/>
        </authorList>
    </citation>
    <scope>NUCLEOTIDE SEQUENCE [LARGE SCALE GENOMIC DNA]</scope>
    <source>
        <strain>K12 / W3110 / ATCC 27325 / DSM 5911</strain>
    </source>
</reference>
<reference key="4">
    <citation type="journal article" date="2005" name="Science">
        <title>Global topology analysis of the Escherichia coli inner membrane proteome.</title>
        <authorList>
            <person name="Daley D.O."/>
            <person name="Rapp M."/>
            <person name="Granseth E."/>
            <person name="Melen K."/>
            <person name="Drew D."/>
            <person name="von Heijne G."/>
        </authorList>
    </citation>
    <scope>TOPOLOGY [LARGE SCALE ANALYSIS]</scope>
    <source>
        <strain>K12 / MG1655 / ATCC 47076</strain>
    </source>
</reference>
<sequence>MATNKRTLSRIGFYCGLALFLIITLFPFFVMLMTSFKGAKEAISLHPTLLPQQWTLEHYVDIFNPMIFPFVDYFRNSLVVSVVSSVVAVFLGILGAYALSRLRFKGRMTINASFYTVYMFSGILLVVPLFKIITALGIYDTEMALIITMVTQTLPTAVFMLKSYFDTIPDEIEEAAMMDGLNRLQIIFRITVPLAMSGLISVFVYCFMVAWNDYLFASIFLSSASNFTLPVGLNALFSTPDYIWGRMMAASLVTALPVVIMYALSERFIKSGLTAGGVKG</sequence>
<proteinExistence type="evidence at protein level"/>
<feature type="chain" id="PRO_0000060241" description="Inner membrane ABC transporter permease protein YcjP">
    <location>
        <begin position="1"/>
        <end position="280"/>
    </location>
</feature>
<feature type="topological domain" description="Cytoplasmic" evidence="1">
    <location>
        <begin position="1"/>
        <end position="10"/>
    </location>
</feature>
<feature type="transmembrane region" description="Helical" evidence="2">
    <location>
        <begin position="11"/>
        <end position="31"/>
    </location>
</feature>
<feature type="topological domain" description="Periplasmic" evidence="1">
    <location>
        <begin position="32"/>
        <end position="53"/>
    </location>
</feature>
<feature type="transmembrane region" description="Helical" evidence="2">
    <location>
        <begin position="54"/>
        <end position="74"/>
    </location>
</feature>
<feature type="topological domain" description="Cytoplasmic" evidence="1">
    <location>
        <begin position="75"/>
        <end position="77"/>
    </location>
</feature>
<feature type="transmembrane region" description="Helical" evidence="2">
    <location>
        <begin position="78"/>
        <end position="98"/>
    </location>
</feature>
<feature type="topological domain" description="Periplasmic" evidence="1">
    <location>
        <begin position="99"/>
        <end position="117"/>
    </location>
</feature>
<feature type="transmembrane region" description="Helical" evidence="2">
    <location>
        <begin position="118"/>
        <end position="138"/>
    </location>
</feature>
<feature type="topological domain" description="Cytoplasmic" evidence="1">
    <location>
        <begin position="139"/>
        <end position="140"/>
    </location>
</feature>
<feature type="transmembrane region" description="Helical" evidence="2">
    <location>
        <begin position="141"/>
        <end position="161"/>
    </location>
</feature>
<feature type="topological domain" description="Periplasmic" evidence="1">
    <location>
        <begin position="162"/>
        <end position="189"/>
    </location>
</feature>
<feature type="transmembrane region" description="Helical" evidence="2">
    <location>
        <begin position="190"/>
        <end position="210"/>
    </location>
</feature>
<feature type="topological domain" description="Cytoplasmic" evidence="1">
    <location>
        <begin position="211"/>
        <end position="214"/>
    </location>
</feature>
<feature type="transmembrane region" description="Helical" evidence="2">
    <location>
        <begin position="215"/>
        <end position="235"/>
    </location>
</feature>
<feature type="topological domain" description="Periplasmic" evidence="1">
    <location>
        <begin position="236"/>
        <end position="242"/>
    </location>
</feature>
<feature type="transmembrane region" description="Helical" evidence="2">
    <location>
        <begin position="243"/>
        <end position="263"/>
    </location>
</feature>
<feature type="topological domain" description="Cytoplasmic" evidence="1">
    <location>
        <begin position="264"/>
        <end position="280"/>
    </location>
</feature>
<feature type="domain" description="ABC transmembrane type-1" evidence="2">
    <location>
        <begin position="74"/>
        <end position="265"/>
    </location>
</feature>
<accession>P77716</accession>
<comment type="function">
    <text>Probably part of the binding-protein-dependent transport system YcjNOP. Probably responsible for the translocation of the substrate across the membrane.</text>
</comment>
<comment type="subcellular location">
    <subcellularLocation>
        <location>Cell inner membrane</location>
        <topology>Multi-pass membrane protein</topology>
    </subcellularLocation>
</comment>
<comment type="similarity">
    <text evidence="3">Belongs to the binding-protein-dependent transport system permease family. MalFG subfamily.</text>
</comment>
<evidence type="ECO:0000255" key="1"/>
<evidence type="ECO:0000255" key="2">
    <source>
        <dbReference type="PROSITE-ProRule" id="PRU00441"/>
    </source>
</evidence>
<evidence type="ECO:0000305" key="3"/>
<organism>
    <name type="scientific">Escherichia coli (strain K12)</name>
    <dbReference type="NCBI Taxonomy" id="83333"/>
    <lineage>
        <taxon>Bacteria</taxon>
        <taxon>Pseudomonadati</taxon>
        <taxon>Pseudomonadota</taxon>
        <taxon>Gammaproteobacteria</taxon>
        <taxon>Enterobacterales</taxon>
        <taxon>Enterobacteriaceae</taxon>
        <taxon>Escherichia</taxon>
    </lineage>
</organism>
<gene>
    <name type="primary">ycjP</name>
    <name type="ordered locus">b1312</name>
    <name type="ordered locus">JW1305</name>
</gene>
<keyword id="KW-0997">Cell inner membrane</keyword>
<keyword id="KW-1003">Cell membrane</keyword>
<keyword id="KW-0472">Membrane</keyword>
<keyword id="KW-1185">Reference proteome</keyword>
<keyword id="KW-0812">Transmembrane</keyword>
<keyword id="KW-1133">Transmembrane helix</keyword>
<keyword id="KW-0813">Transport</keyword>
<protein>
    <recommendedName>
        <fullName>Inner membrane ABC transporter permease protein YcjP</fullName>
    </recommendedName>
</protein>
<dbReference type="EMBL" id="U00096">
    <property type="protein sequence ID" value="AAC74394.1"/>
    <property type="molecule type" value="Genomic_DNA"/>
</dbReference>
<dbReference type="EMBL" id="AP009048">
    <property type="protein sequence ID" value="BAA14888.1"/>
    <property type="molecule type" value="Genomic_DNA"/>
</dbReference>
<dbReference type="PIR" id="C64880">
    <property type="entry name" value="C64880"/>
</dbReference>
<dbReference type="RefSeq" id="NP_415828.1">
    <property type="nucleotide sequence ID" value="NC_000913.3"/>
</dbReference>
<dbReference type="RefSeq" id="WP_000224659.1">
    <property type="nucleotide sequence ID" value="NZ_STEB01000005.1"/>
</dbReference>
<dbReference type="SMR" id="P77716"/>
<dbReference type="BioGRID" id="4263196">
    <property type="interactions" value="13"/>
</dbReference>
<dbReference type="ComplexPortal" id="CPX-4389">
    <property type="entry name" value="YcjNOP ABC transporter complex"/>
</dbReference>
<dbReference type="FunCoup" id="P77716">
    <property type="interactions" value="467"/>
</dbReference>
<dbReference type="STRING" id="511145.b1312"/>
<dbReference type="TCDB" id="3.A.1.1.46">
    <property type="family name" value="the atp-binding cassette (abc) superfamily"/>
</dbReference>
<dbReference type="PaxDb" id="511145-b1312"/>
<dbReference type="EnsemblBacteria" id="AAC74394">
    <property type="protein sequence ID" value="AAC74394"/>
    <property type="gene ID" value="b1312"/>
</dbReference>
<dbReference type="GeneID" id="945892"/>
<dbReference type="KEGG" id="ecj:JW1305"/>
<dbReference type="KEGG" id="eco:b1312"/>
<dbReference type="KEGG" id="ecoc:C3026_07690"/>
<dbReference type="PATRIC" id="fig|1411691.4.peg.967"/>
<dbReference type="EchoBASE" id="EB3672"/>
<dbReference type="eggNOG" id="COG0395">
    <property type="taxonomic scope" value="Bacteria"/>
</dbReference>
<dbReference type="HOGENOM" id="CLU_016047_1_2_6"/>
<dbReference type="InParanoid" id="P77716"/>
<dbReference type="OMA" id="TAWNEFP"/>
<dbReference type="OrthoDB" id="9815445at2"/>
<dbReference type="PhylomeDB" id="P77716"/>
<dbReference type="BioCyc" id="EcoCyc:YCJP-MONOMER"/>
<dbReference type="PRO" id="PR:P77716"/>
<dbReference type="Proteomes" id="UP000000625">
    <property type="component" value="Chromosome"/>
</dbReference>
<dbReference type="GO" id="GO:0055052">
    <property type="term" value="C:ATP-binding cassette (ABC) transporter complex, substrate-binding subunit-containing"/>
    <property type="evidence" value="ECO:0000303"/>
    <property type="project" value="ComplexPortal"/>
</dbReference>
<dbReference type="GO" id="GO:0016020">
    <property type="term" value="C:membrane"/>
    <property type="evidence" value="ECO:0000303"/>
    <property type="project" value="ComplexPortal"/>
</dbReference>
<dbReference type="GO" id="GO:0005886">
    <property type="term" value="C:plasma membrane"/>
    <property type="evidence" value="ECO:0000314"/>
    <property type="project" value="EcoCyc"/>
</dbReference>
<dbReference type="GO" id="GO:0055085">
    <property type="term" value="P:transmembrane transport"/>
    <property type="evidence" value="ECO:0000303"/>
    <property type="project" value="ComplexPortal"/>
</dbReference>
<dbReference type="CDD" id="cd06261">
    <property type="entry name" value="TM_PBP2"/>
    <property type="match status" value="1"/>
</dbReference>
<dbReference type="FunFam" id="1.10.3720.10:FF:000037">
    <property type="entry name" value="Inner membrane ABC transporter permease ycjP"/>
    <property type="match status" value="1"/>
</dbReference>
<dbReference type="Gene3D" id="1.10.3720.10">
    <property type="entry name" value="MetI-like"/>
    <property type="match status" value="1"/>
</dbReference>
<dbReference type="InterPro" id="IPR050901">
    <property type="entry name" value="BP-dep_ABC_trans_perm"/>
</dbReference>
<dbReference type="InterPro" id="IPR000515">
    <property type="entry name" value="MetI-like"/>
</dbReference>
<dbReference type="InterPro" id="IPR035906">
    <property type="entry name" value="MetI-like_sf"/>
</dbReference>
<dbReference type="PANTHER" id="PTHR32243:SF18">
    <property type="entry name" value="INNER MEMBRANE ABC TRANSPORTER PERMEASE PROTEIN YCJP"/>
    <property type="match status" value="1"/>
</dbReference>
<dbReference type="PANTHER" id="PTHR32243">
    <property type="entry name" value="MALTOSE TRANSPORT SYSTEM PERMEASE-RELATED"/>
    <property type="match status" value="1"/>
</dbReference>
<dbReference type="Pfam" id="PF00528">
    <property type="entry name" value="BPD_transp_1"/>
    <property type="match status" value="1"/>
</dbReference>
<dbReference type="SUPFAM" id="SSF161098">
    <property type="entry name" value="MetI-like"/>
    <property type="match status" value="1"/>
</dbReference>
<dbReference type="PROSITE" id="PS50928">
    <property type="entry name" value="ABC_TM1"/>
    <property type="match status" value="1"/>
</dbReference>
<name>YCJP_ECOLI</name>